<protein>
    <recommendedName>
        <fullName evidence="1">Phosphoserine aminotransferase</fullName>
        <ecNumber evidence="1">2.6.1.52</ecNumber>
    </recommendedName>
    <alternativeName>
        <fullName evidence="1">Phosphohydroxythreonine aminotransferase</fullName>
        <shortName evidence="1">PSAT</shortName>
    </alternativeName>
</protein>
<proteinExistence type="inferred from homology"/>
<evidence type="ECO:0000255" key="1">
    <source>
        <dbReference type="HAMAP-Rule" id="MF_00160"/>
    </source>
</evidence>
<reference key="1">
    <citation type="submission" date="2006-12" db="EMBL/GenBank/DDBJ databases">
        <title>Complete sequence of Shewanella sp. W3-18-1.</title>
        <authorList>
            <consortium name="US DOE Joint Genome Institute"/>
            <person name="Copeland A."/>
            <person name="Lucas S."/>
            <person name="Lapidus A."/>
            <person name="Barry K."/>
            <person name="Detter J.C."/>
            <person name="Glavina del Rio T."/>
            <person name="Hammon N."/>
            <person name="Israni S."/>
            <person name="Dalin E."/>
            <person name="Tice H."/>
            <person name="Pitluck S."/>
            <person name="Chain P."/>
            <person name="Malfatti S."/>
            <person name="Shin M."/>
            <person name="Vergez L."/>
            <person name="Schmutz J."/>
            <person name="Larimer F."/>
            <person name="Land M."/>
            <person name="Hauser L."/>
            <person name="Kyrpides N."/>
            <person name="Lykidis A."/>
            <person name="Tiedje J."/>
            <person name="Richardson P."/>
        </authorList>
    </citation>
    <scope>NUCLEOTIDE SEQUENCE [LARGE SCALE GENOMIC DNA]</scope>
    <source>
        <strain>W3-18-1</strain>
    </source>
</reference>
<name>SERC_SHESW</name>
<feature type="chain" id="PRO_1000203576" description="Phosphoserine aminotransferase">
    <location>
        <begin position="1"/>
        <end position="363"/>
    </location>
</feature>
<feature type="binding site" evidence="1">
    <location>
        <position position="42"/>
    </location>
    <ligand>
        <name>L-glutamate</name>
        <dbReference type="ChEBI" id="CHEBI:29985"/>
    </ligand>
</feature>
<feature type="binding site" evidence="1">
    <location>
        <begin position="76"/>
        <end position="77"/>
    </location>
    <ligand>
        <name>pyridoxal 5'-phosphate</name>
        <dbReference type="ChEBI" id="CHEBI:597326"/>
    </ligand>
</feature>
<feature type="binding site" evidence="1">
    <location>
        <position position="102"/>
    </location>
    <ligand>
        <name>pyridoxal 5'-phosphate</name>
        <dbReference type="ChEBI" id="CHEBI:597326"/>
    </ligand>
</feature>
<feature type="binding site" evidence="1">
    <location>
        <position position="156"/>
    </location>
    <ligand>
        <name>pyridoxal 5'-phosphate</name>
        <dbReference type="ChEBI" id="CHEBI:597326"/>
    </ligand>
</feature>
<feature type="binding site" evidence="1">
    <location>
        <position position="175"/>
    </location>
    <ligand>
        <name>pyridoxal 5'-phosphate</name>
        <dbReference type="ChEBI" id="CHEBI:597326"/>
    </ligand>
</feature>
<feature type="binding site" evidence="1">
    <location>
        <position position="198"/>
    </location>
    <ligand>
        <name>pyridoxal 5'-phosphate</name>
        <dbReference type="ChEBI" id="CHEBI:597326"/>
    </ligand>
</feature>
<feature type="binding site" evidence="1">
    <location>
        <begin position="240"/>
        <end position="241"/>
    </location>
    <ligand>
        <name>pyridoxal 5'-phosphate</name>
        <dbReference type="ChEBI" id="CHEBI:597326"/>
    </ligand>
</feature>
<feature type="modified residue" description="N6-(pyridoxal phosphate)lysine" evidence="1">
    <location>
        <position position="199"/>
    </location>
</feature>
<accession>A1RJD3</accession>
<keyword id="KW-0028">Amino-acid biosynthesis</keyword>
<keyword id="KW-0032">Aminotransferase</keyword>
<keyword id="KW-0963">Cytoplasm</keyword>
<keyword id="KW-0663">Pyridoxal phosphate</keyword>
<keyword id="KW-0664">Pyridoxine biosynthesis</keyword>
<keyword id="KW-0718">Serine biosynthesis</keyword>
<keyword id="KW-0808">Transferase</keyword>
<dbReference type="EC" id="2.6.1.52" evidence="1"/>
<dbReference type="EMBL" id="CP000503">
    <property type="protein sequence ID" value="ABM24778.1"/>
    <property type="molecule type" value="Genomic_DNA"/>
</dbReference>
<dbReference type="RefSeq" id="WP_011789269.1">
    <property type="nucleotide sequence ID" value="NC_008750.1"/>
</dbReference>
<dbReference type="SMR" id="A1RJD3"/>
<dbReference type="KEGG" id="shw:Sputw3181_1943"/>
<dbReference type="HOGENOM" id="CLU_034866_0_2_6"/>
<dbReference type="UniPathway" id="UPA00135">
    <property type="reaction ID" value="UER00197"/>
</dbReference>
<dbReference type="UniPathway" id="UPA00244">
    <property type="reaction ID" value="UER00311"/>
</dbReference>
<dbReference type="Proteomes" id="UP000002597">
    <property type="component" value="Chromosome"/>
</dbReference>
<dbReference type="GO" id="GO:0005737">
    <property type="term" value="C:cytoplasm"/>
    <property type="evidence" value="ECO:0007669"/>
    <property type="project" value="UniProtKB-SubCell"/>
</dbReference>
<dbReference type="GO" id="GO:0004648">
    <property type="term" value="F:O-phospho-L-serine:2-oxoglutarate aminotransferase activity"/>
    <property type="evidence" value="ECO:0007669"/>
    <property type="project" value="UniProtKB-UniRule"/>
</dbReference>
<dbReference type="GO" id="GO:0030170">
    <property type="term" value="F:pyridoxal phosphate binding"/>
    <property type="evidence" value="ECO:0007669"/>
    <property type="project" value="UniProtKB-UniRule"/>
</dbReference>
<dbReference type="GO" id="GO:0006564">
    <property type="term" value="P:L-serine biosynthetic process"/>
    <property type="evidence" value="ECO:0007669"/>
    <property type="project" value="UniProtKB-UniRule"/>
</dbReference>
<dbReference type="GO" id="GO:0008615">
    <property type="term" value="P:pyridoxine biosynthetic process"/>
    <property type="evidence" value="ECO:0007669"/>
    <property type="project" value="UniProtKB-UniRule"/>
</dbReference>
<dbReference type="FunFam" id="3.40.640.10:FF:000010">
    <property type="entry name" value="Phosphoserine aminotransferase"/>
    <property type="match status" value="1"/>
</dbReference>
<dbReference type="FunFam" id="3.90.1150.10:FF:000006">
    <property type="entry name" value="Phosphoserine aminotransferase"/>
    <property type="match status" value="1"/>
</dbReference>
<dbReference type="Gene3D" id="3.90.1150.10">
    <property type="entry name" value="Aspartate Aminotransferase, domain 1"/>
    <property type="match status" value="1"/>
</dbReference>
<dbReference type="Gene3D" id="3.40.640.10">
    <property type="entry name" value="Type I PLP-dependent aspartate aminotransferase-like (Major domain)"/>
    <property type="match status" value="1"/>
</dbReference>
<dbReference type="HAMAP" id="MF_00160">
    <property type="entry name" value="SerC_aminotrans_5"/>
    <property type="match status" value="1"/>
</dbReference>
<dbReference type="InterPro" id="IPR000192">
    <property type="entry name" value="Aminotrans_V_dom"/>
</dbReference>
<dbReference type="InterPro" id="IPR020578">
    <property type="entry name" value="Aminotrans_V_PyrdxlP_BS"/>
</dbReference>
<dbReference type="InterPro" id="IPR022278">
    <property type="entry name" value="Pser_aminoTfrase"/>
</dbReference>
<dbReference type="InterPro" id="IPR015424">
    <property type="entry name" value="PyrdxlP-dep_Trfase"/>
</dbReference>
<dbReference type="InterPro" id="IPR015421">
    <property type="entry name" value="PyrdxlP-dep_Trfase_major"/>
</dbReference>
<dbReference type="InterPro" id="IPR015422">
    <property type="entry name" value="PyrdxlP-dep_Trfase_small"/>
</dbReference>
<dbReference type="NCBIfam" id="NF003764">
    <property type="entry name" value="PRK05355.1"/>
    <property type="match status" value="1"/>
</dbReference>
<dbReference type="NCBIfam" id="TIGR01364">
    <property type="entry name" value="serC_1"/>
    <property type="match status" value="1"/>
</dbReference>
<dbReference type="PANTHER" id="PTHR43247">
    <property type="entry name" value="PHOSPHOSERINE AMINOTRANSFERASE"/>
    <property type="match status" value="1"/>
</dbReference>
<dbReference type="PANTHER" id="PTHR43247:SF1">
    <property type="entry name" value="PHOSPHOSERINE AMINOTRANSFERASE"/>
    <property type="match status" value="1"/>
</dbReference>
<dbReference type="Pfam" id="PF00266">
    <property type="entry name" value="Aminotran_5"/>
    <property type="match status" value="1"/>
</dbReference>
<dbReference type="PIRSF" id="PIRSF000525">
    <property type="entry name" value="SerC"/>
    <property type="match status" value="1"/>
</dbReference>
<dbReference type="SUPFAM" id="SSF53383">
    <property type="entry name" value="PLP-dependent transferases"/>
    <property type="match status" value="1"/>
</dbReference>
<dbReference type="PROSITE" id="PS00595">
    <property type="entry name" value="AA_TRANSFER_CLASS_5"/>
    <property type="match status" value="1"/>
</dbReference>
<gene>
    <name evidence="1" type="primary">serC</name>
    <name type="ordered locus">Sputw3181_1943</name>
</gene>
<comment type="function">
    <text evidence="1">Catalyzes the reversible conversion of 3-phosphohydroxypyruvate to phosphoserine and of 3-hydroxy-2-oxo-4-phosphonooxybutanoate to phosphohydroxythreonine.</text>
</comment>
<comment type="catalytic activity">
    <reaction evidence="1">
        <text>O-phospho-L-serine + 2-oxoglutarate = 3-phosphooxypyruvate + L-glutamate</text>
        <dbReference type="Rhea" id="RHEA:14329"/>
        <dbReference type="ChEBI" id="CHEBI:16810"/>
        <dbReference type="ChEBI" id="CHEBI:18110"/>
        <dbReference type="ChEBI" id="CHEBI:29985"/>
        <dbReference type="ChEBI" id="CHEBI:57524"/>
        <dbReference type="EC" id="2.6.1.52"/>
    </reaction>
</comment>
<comment type="catalytic activity">
    <reaction evidence="1">
        <text>4-(phosphooxy)-L-threonine + 2-oxoglutarate = (R)-3-hydroxy-2-oxo-4-phosphooxybutanoate + L-glutamate</text>
        <dbReference type="Rhea" id="RHEA:16573"/>
        <dbReference type="ChEBI" id="CHEBI:16810"/>
        <dbReference type="ChEBI" id="CHEBI:29985"/>
        <dbReference type="ChEBI" id="CHEBI:58452"/>
        <dbReference type="ChEBI" id="CHEBI:58538"/>
        <dbReference type="EC" id="2.6.1.52"/>
    </reaction>
</comment>
<comment type="cofactor">
    <cofactor evidence="1">
        <name>pyridoxal 5'-phosphate</name>
        <dbReference type="ChEBI" id="CHEBI:597326"/>
    </cofactor>
    <text evidence="1">Binds 1 pyridoxal phosphate per subunit.</text>
</comment>
<comment type="pathway">
    <text evidence="1">Amino-acid biosynthesis; L-serine biosynthesis; L-serine from 3-phospho-D-glycerate: step 2/3.</text>
</comment>
<comment type="pathway">
    <text evidence="1">Cofactor biosynthesis; pyridoxine 5'-phosphate biosynthesis; pyridoxine 5'-phosphate from D-erythrose 4-phosphate: step 3/5.</text>
</comment>
<comment type="subunit">
    <text evidence="1">Homodimer.</text>
</comment>
<comment type="subcellular location">
    <subcellularLocation>
        <location evidence="1">Cytoplasm</location>
    </subcellularLocation>
</comment>
<comment type="similarity">
    <text evidence="1">Belongs to the class-V pyridoxal-phosphate-dependent aminotransferase family. SerC subfamily.</text>
</comment>
<sequence>MSAIYNFCAGPAMLPTAVMKKAQQELLDWNGQGVSVMEISHRSKEFIALTKQAEADLRELMHIPANYHVLFMHGGGRGQFSAVVNNFLGNDGRALYLVSGQWSSSALAEAQKLAGDAQIDSLNIVEKHNGLNAVVLPDLHKIDADYRYVHYCPNETVDGIEIFDELDSPWPIVADLSSTIMSREIDVSRYGLIYAGAQKNIGPSGLSIVIVRDDMLKLPSLVQSSIMDYRLAVEHDSMFNTPPTFAWYLAAEVFAWLKSIGGIASIAKINQQKAQMLYQCIDSNTFYRNGVVASNRSQMNVTFQLADETLDGEFLKQAQVAGLVALKGHRIVGGMRASLYNAMPLEGVIALVKFMNEFAAKYR</sequence>
<organism>
    <name type="scientific">Shewanella sp. (strain W3-18-1)</name>
    <dbReference type="NCBI Taxonomy" id="351745"/>
    <lineage>
        <taxon>Bacteria</taxon>
        <taxon>Pseudomonadati</taxon>
        <taxon>Pseudomonadota</taxon>
        <taxon>Gammaproteobacteria</taxon>
        <taxon>Alteromonadales</taxon>
        <taxon>Shewanellaceae</taxon>
        <taxon>Shewanella</taxon>
    </lineage>
</organism>